<accession>P0DO88</accession>
<protein>
    <recommendedName>
        <fullName evidence="4">Geissoschizine oxidase</fullName>
        <shortName evidence="4">SpGO</shortName>
        <ecNumber evidence="3">1.14.19.80</ecNumber>
    </recommendedName>
    <alternativeName>
        <fullName evidence="4">CYP450 monooxygenase GO</fullName>
    </alternativeName>
    <alternativeName>
        <fullName evidence="4">Cytochrome P450 GO</fullName>
    </alternativeName>
</protein>
<feature type="chain" id="PRO_0000461113" description="Geissoschizine oxidase">
    <location>
        <begin position="1"/>
        <end position="503"/>
    </location>
</feature>
<feature type="transmembrane region" description="Helical" evidence="2">
    <location>
        <begin position="7"/>
        <end position="27"/>
    </location>
</feature>
<feature type="binding site" description="axial binding residue" evidence="1">
    <location>
        <position position="441"/>
    </location>
    <ligand>
        <name>heme</name>
        <dbReference type="ChEBI" id="CHEBI:30413"/>
    </ligand>
    <ligandPart>
        <name>Fe</name>
        <dbReference type="ChEBI" id="CHEBI:18248"/>
    </ligandPart>
</feature>
<sequence length="503" mass="56733">MQMEFSFSSPSFFFLLPFLFLLIKPLISRKSSLKLPPGPKKFPIVGNLFQMEGLLPHLALKKMTDKYGPICHLKLGELEAVVVSSAELAKEVLNTHAVTFADRPVTNVSKIVMYNNSGMTFARYGDYFKLLRQIYASELLSPKRVRSSSNHMEDELSKFVVKIQAETGKPIFLHDRVKSYLFAVLFDSMIGGVCKCPERYIEAAKELSANSAAMRLEDFFPSVTLLPKLSGFNTVLAKLKKEIDDLLDDLISEREKRPANATGPMEEHMLDVLLKLRNGSGSEAKIPITNEDIKAVVFELMLANLSTAATEEWAMSEMMRNPKVFKKAQDEVRRAFKGKNRICASELHKLEYLKLVIKEALRMHPPAPLLFPRKAREDCEIGGYTIPAGTMVWVNYWAVGRDPQLWHDADKFEPERFSDTSIDFNGSHSELIPFGAGRRICPGILYSATNLELLLSALLYHFDWELPSGEKPEEIDMDEFYGSGCIRKNPLALVPKVVIPCQA</sequence>
<proteinExistence type="evidence at protein level"/>
<keyword id="KW-0349">Heme</keyword>
<keyword id="KW-0408">Iron</keyword>
<keyword id="KW-0472">Membrane</keyword>
<keyword id="KW-0479">Metal-binding</keyword>
<keyword id="KW-0503">Monooxygenase</keyword>
<keyword id="KW-0560">Oxidoreductase</keyword>
<keyword id="KW-0812">Transmembrane</keyword>
<keyword id="KW-1133">Transmembrane helix</keyword>
<comment type="function">
    <text evidence="3">Monooxygenase involved in the biosynthesis of curare monoterpene indole alkaloids (MIAs), natural products such as diaboline, a pharmacologically active compound used to regulate blood pressure (PubMed:35794473). Curare alkaloids act as animal glycine receptor antagonists (PubMed:35794473). Catalyzes the conversion of geissoschizine to dehydropreakuammicine by cyclization, which is spontaneously converted into akuammicine by aromatization (PubMed:35794473).</text>
</comment>
<comment type="catalytic activity">
    <reaction evidence="3">
        <text>(19E)-geissoschizine + reduced [NADPH--hemoprotein reductase] + O2 = akuammicine + formate + oxidized [NADPH--hemoprotein reductase] + H2O + H(+)</text>
        <dbReference type="Rhea" id="RHEA:58520"/>
        <dbReference type="Rhea" id="RHEA-COMP:11964"/>
        <dbReference type="Rhea" id="RHEA-COMP:11965"/>
        <dbReference type="ChEBI" id="CHEBI:15377"/>
        <dbReference type="ChEBI" id="CHEBI:15378"/>
        <dbReference type="ChEBI" id="CHEBI:15379"/>
        <dbReference type="ChEBI" id="CHEBI:15740"/>
        <dbReference type="ChEBI" id="CHEBI:17037"/>
        <dbReference type="ChEBI" id="CHEBI:57618"/>
        <dbReference type="ChEBI" id="CHEBI:58210"/>
        <dbReference type="ChEBI" id="CHEBI:142754"/>
        <dbReference type="EC" id="1.14.19.80"/>
    </reaction>
    <physiologicalReaction direction="left-to-right" evidence="3">
        <dbReference type="Rhea" id="RHEA:58521"/>
    </physiologicalReaction>
</comment>
<comment type="catalytic activity">
    <reaction evidence="3">
        <text>(19E)-geissoschizine + reduced [NADPH--hemoprotein reductase] + O2 = 3,17-didehydrostemmadenine + oxidized [NADPH--hemoprotein reductase] + 2 H2O</text>
        <dbReference type="Rhea" id="RHEA:58516"/>
        <dbReference type="Rhea" id="RHEA-COMP:11964"/>
        <dbReference type="Rhea" id="RHEA-COMP:11965"/>
        <dbReference type="ChEBI" id="CHEBI:15377"/>
        <dbReference type="ChEBI" id="CHEBI:15379"/>
        <dbReference type="ChEBI" id="CHEBI:17037"/>
        <dbReference type="ChEBI" id="CHEBI:57618"/>
        <dbReference type="ChEBI" id="CHEBI:58210"/>
        <dbReference type="ChEBI" id="CHEBI:142668"/>
    </reaction>
    <physiologicalReaction direction="left-to-right" evidence="3">
        <dbReference type="Rhea" id="RHEA:58517"/>
    </physiologicalReaction>
</comment>
<comment type="catalytic activity">
    <reaction evidence="3">
        <text>3,17-didehydrostemmadenine = 17-dehydropreakuammicine</text>
        <dbReference type="Rhea" id="RHEA:79587"/>
        <dbReference type="ChEBI" id="CHEBI:142668"/>
        <dbReference type="ChEBI" id="CHEBI:230469"/>
    </reaction>
    <physiologicalReaction direction="left-to-right" evidence="3">
        <dbReference type="Rhea" id="RHEA:79588"/>
    </physiologicalReaction>
</comment>
<comment type="cofactor">
    <cofactor evidence="1">
        <name>heme</name>
        <dbReference type="ChEBI" id="CHEBI:30413"/>
    </cofactor>
</comment>
<comment type="pathway">
    <text evidence="3">Alkaloid biosynthesis.</text>
</comment>
<comment type="subcellular location">
    <subcellularLocation>
        <location evidence="2">Membrane</location>
        <topology evidence="2">Single-pass membrane protein</topology>
    </subcellularLocation>
</comment>
<comment type="similarity">
    <text evidence="5">Belongs to the cytochrome P450 family.</text>
</comment>
<evidence type="ECO:0000250" key="1">
    <source>
        <dbReference type="UniProtKB" id="Q96242"/>
    </source>
</evidence>
<evidence type="ECO:0000255" key="2"/>
<evidence type="ECO:0000269" key="3">
    <source>
    </source>
</evidence>
<evidence type="ECO:0000303" key="4">
    <source>
    </source>
</evidence>
<evidence type="ECO:0000305" key="5"/>
<gene>
    <name evidence="4" type="primary">GO</name>
</gene>
<name>GO_STRYX</name>
<reference key="1">
    <citation type="journal article" date="2022" name="Nature">
        <title>Biosynthesis of strychnine.</title>
        <authorList>
            <person name="Hong B."/>
            <person name="Grzech D."/>
            <person name="Caputi L."/>
            <person name="Sonawane P."/>
            <person name="Lopez C.E.R."/>
            <person name="Kamileen M.O."/>
            <person name="Hernandez Lozada N.J."/>
            <person name="Grabe V."/>
            <person name="O'Connor S.E."/>
        </authorList>
    </citation>
    <scope>NUCLEOTIDE SEQUENCE [MRNA]</scope>
    <scope>FUNCTION</scope>
    <scope>CATALYTIC ACTIVITY</scope>
    <scope>PATHWAY</scope>
</reference>
<dbReference type="EC" id="1.14.19.80" evidence="3"/>
<dbReference type="EMBL" id="OM304299">
    <property type="protein sequence ID" value="UQZ09630.1"/>
    <property type="molecule type" value="mRNA"/>
</dbReference>
<dbReference type="SMR" id="P0DO88"/>
<dbReference type="KEGG" id="ag:UQZ09630"/>
<dbReference type="GO" id="GO:0016020">
    <property type="term" value="C:membrane"/>
    <property type="evidence" value="ECO:0007669"/>
    <property type="project" value="UniProtKB-SubCell"/>
</dbReference>
<dbReference type="GO" id="GO:0020037">
    <property type="term" value="F:heme binding"/>
    <property type="evidence" value="ECO:0007669"/>
    <property type="project" value="InterPro"/>
</dbReference>
<dbReference type="GO" id="GO:0005506">
    <property type="term" value="F:iron ion binding"/>
    <property type="evidence" value="ECO:0007669"/>
    <property type="project" value="InterPro"/>
</dbReference>
<dbReference type="GO" id="GO:0004497">
    <property type="term" value="F:monooxygenase activity"/>
    <property type="evidence" value="ECO:0000314"/>
    <property type="project" value="UniProtKB"/>
</dbReference>
<dbReference type="GO" id="GO:0016705">
    <property type="term" value="F:oxidoreductase activity, acting on paired donors, with incorporation or reduction of molecular oxygen"/>
    <property type="evidence" value="ECO:0007669"/>
    <property type="project" value="InterPro"/>
</dbReference>
<dbReference type="GO" id="GO:0009821">
    <property type="term" value="P:alkaloid biosynthetic process"/>
    <property type="evidence" value="ECO:0000314"/>
    <property type="project" value="UniProtKB"/>
</dbReference>
<dbReference type="CDD" id="cd11072">
    <property type="entry name" value="CYP71-like"/>
    <property type="match status" value="1"/>
</dbReference>
<dbReference type="FunFam" id="1.10.630.10:FF:000043">
    <property type="entry name" value="Cytochrome P450 99A2"/>
    <property type="match status" value="1"/>
</dbReference>
<dbReference type="Gene3D" id="1.10.630.10">
    <property type="entry name" value="Cytochrome P450"/>
    <property type="match status" value="1"/>
</dbReference>
<dbReference type="InterPro" id="IPR001128">
    <property type="entry name" value="Cyt_P450"/>
</dbReference>
<dbReference type="InterPro" id="IPR017972">
    <property type="entry name" value="Cyt_P450_CS"/>
</dbReference>
<dbReference type="InterPro" id="IPR002401">
    <property type="entry name" value="Cyt_P450_E_grp-I"/>
</dbReference>
<dbReference type="InterPro" id="IPR036396">
    <property type="entry name" value="Cyt_P450_sf"/>
</dbReference>
<dbReference type="PANTHER" id="PTHR47955:SF8">
    <property type="entry name" value="CYTOCHROME P450 71D11-LIKE"/>
    <property type="match status" value="1"/>
</dbReference>
<dbReference type="PANTHER" id="PTHR47955">
    <property type="entry name" value="CYTOCHROME P450 FAMILY 71 PROTEIN"/>
    <property type="match status" value="1"/>
</dbReference>
<dbReference type="Pfam" id="PF00067">
    <property type="entry name" value="p450"/>
    <property type="match status" value="1"/>
</dbReference>
<dbReference type="PRINTS" id="PR00463">
    <property type="entry name" value="EP450I"/>
</dbReference>
<dbReference type="PRINTS" id="PR00385">
    <property type="entry name" value="P450"/>
</dbReference>
<dbReference type="SUPFAM" id="SSF48264">
    <property type="entry name" value="Cytochrome P450"/>
    <property type="match status" value="1"/>
</dbReference>
<dbReference type="PROSITE" id="PS00086">
    <property type="entry name" value="CYTOCHROME_P450"/>
    <property type="match status" value="1"/>
</dbReference>
<organism>
    <name type="scientific">Strychnos sp</name>
    <dbReference type="NCBI Taxonomy" id="2946199"/>
    <lineage>
        <taxon>Eukaryota</taxon>
        <taxon>Viridiplantae</taxon>
        <taxon>Streptophyta</taxon>
        <taxon>Embryophyta</taxon>
        <taxon>Tracheophyta</taxon>
        <taxon>Spermatophyta</taxon>
        <taxon>Magnoliopsida</taxon>
        <taxon>eudicotyledons</taxon>
        <taxon>Gunneridae</taxon>
        <taxon>Pentapetalae</taxon>
        <taxon>asterids</taxon>
        <taxon>lamiids</taxon>
        <taxon>Gentianales</taxon>
        <taxon>Loganiaceae</taxon>
        <taxon>Strychnos</taxon>
    </lineage>
</organism>